<proteinExistence type="inferred from homology"/>
<protein>
    <recommendedName>
        <fullName evidence="1">Heat-inducible transcription repressor HrcA</fullName>
    </recommendedName>
</protein>
<comment type="function">
    <text evidence="1">Negative regulator of class I heat shock genes (grpE-dnaK-dnaJ and groELS operons). Prevents heat-shock induction of these operons.</text>
</comment>
<comment type="similarity">
    <text evidence="1">Belongs to the HrcA family.</text>
</comment>
<keyword id="KW-1185">Reference proteome</keyword>
<keyword id="KW-0678">Repressor</keyword>
<keyword id="KW-0346">Stress response</keyword>
<keyword id="KW-0804">Transcription</keyword>
<keyword id="KW-0805">Transcription regulation</keyword>
<feature type="chain" id="PRO_1000010395" description="Heat-inducible transcription repressor HrcA">
    <location>
        <begin position="1"/>
        <end position="357"/>
    </location>
</feature>
<dbReference type="EMBL" id="CP000492">
    <property type="protein sequence ID" value="ABL65890.1"/>
    <property type="molecule type" value="Genomic_DNA"/>
</dbReference>
<dbReference type="RefSeq" id="WP_011745697.1">
    <property type="nucleotide sequence ID" value="NC_008639.1"/>
</dbReference>
<dbReference type="SMR" id="A1BHL3"/>
<dbReference type="STRING" id="290317.Cpha266_1874"/>
<dbReference type="KEGG" id="cph:Cpha266_1874"/>
<dbReference type="eggNOG" id="COG1420">
    <property type="taxonomic scope" value="Bacteria"/>
</dbReference>
<dbReference type="HOGENOM" id="CLU_050019_1_0_10"/>
<dbReference type="OrthoDB" id="9783139at2"/>
<dbReference type="Proteomes" id="UP000008701">
    <property type="component" value="Chromosome"/>
</dbReference>
<dbReference type="GO" id="GO:0003677">
    <property type="term" value="F:DNA binding"/>
    <property type="evidence" value="ECO:0007669"/>
    <property type="project" value="InterPro"/>
</dbReference>
<dbReference type="GO" id="GO:0045892">
    <property type="term" value="P:negative regulation of DNA-templated transcription"/>
    <property type="evidence" value="ECO:0007669"/>
    <property type="project" value="UniProtKB-UniRule"/>
</dbReference>
<dbReference type="Gene3D" id="3.30.450.40">
    <property type="match status" value="1"/>
</dbReference>
<dbReference type="Gene3D" id="3.30.390.60">
    <property type="entry name" value="Heat-inducible transcription repressor hrca homolog, domain 3"/>
    <property type="match status" value="1"/>
</dbReference>
<dbReference type="Gene3D" id="1.10.10.10">
    <property type="entry name" value="Winged helix-like DNA-binding domain superfamily/Winged helix DNA-binding domain"/>
    <property type="match status" value="1"/>
</dbReference>
<dbReference type="HAMAP" id="MF_00081">
    <property type="entry name" value="HrcA"/>
    <property type="match status" value="1"/>
</dbReference>
<dbReference type="InterPro" id="IPR029016">
    <property type="entry name" value="GAF-like_dom_sf"/>
</dbReference>
<dbReference type="InterPro" id="IPR002571">
    <property type="entry name" value="HrcA"/>
</dbReference>
<dbReference type="InterPro" id="IPR021153">
    <property type="entry name" value="HrcA_C"/>
</dbReference>
<dbReference type="InterPro" id="IPR036388">
    <property type="entry name" value="WH-like_DNA-bd_sf"/>
</dbReference>
<dbReference type="InterPro" id="IPR036390">
    <property type="entry name" value="WH_DNA-bd_sf"/>
</dbReference>
<dbReference type="InterPro" id="IPR023120">
    <property type="entry name" value="WHTH_transcript_rep_HrcA_IDD"/>
</dbReference>
<dbReference type="NCBIfam" id="TIGR00331">
    <property type="entry name" value="hrcA"/>
    <property type="match status" value="1"/>
</dbReference>
<dbReference type="PANTHER" id="PTHR34824">
    <property type="entry name" value="HEAT-INDUCIBLE TRANSCRIPTION REPRESSOR HRCA"/>
    <property type="match status" value="1"/>
</dbReference>
<dbReference type="PANTHER" id="PTHR34824:SF1">
    <property type="entry name" value="HEAT-INDUCIBLE TRANSCRIPTION REPRESSOR HRCA"/>
    <property type="match status" value="1"/>
</dbReference>
<dbReference type="Pfam" id="PF01628">
    <property type="entry name" value="HrcA"/>
    <property type="match status" value="1"/>
</dbReference>
<dbReference type="PIRSF" id="PIRSF005485">
    <property type="entry name" value="HrcA"/>
    <property type="match status" value="1"/>
</dbReference>
<dbReference type="SUPFAM" id="SSF55781">
    <property type="entry name" value="GAF domain-like"/>
    <property type="match status" value="1"/>
</dbReference>
<dbReference type="SUPFAM" id="SSF46785">
    <property type="entry name" value="Winged helix' DNA-binding domain"/>
    <property type="match status" value="1"/>
</dbReference>
<gene>
    <name evidence="1" type="primary">hrcA</name>
    <name type="ordered locus">Cpha266_1874</name>
</gene>
<sequence>MESRDLNLRERQVLGIIIQAYVVSAAPVGSRYIARNCNLGLSDATIRNVMADLEDEGYISQPHTSAGRTPTDKGYRYYVDLIMKVRRVNDEEKKRIDADFGQLTTERRGSSSEVLLSAAKVLGSISRQLSVVLSPALSNAVFEKLDMVLLSSTRMMVILSIQSLIVKTIVMELDLAVSRQEVSGVVDLLNQRLSGLTLSEIRKTISMRLSDCLADASLINFVVRSAGQLFDETPIIERLYISGAGYIVDQPEFKQPEKVRDFITMIEDKFSVAKLVERNRIYSETVHPSRMEVSISIGKENRERKAEDLTIVSTPYYVGGMMGKLGILGPTRMDYGHAVSVLNYMADCLSATLSEVN</sequence>
<organism>
    <name type="scientific">Chlorobium phaeobacteroides (strain DSM 266 / SMG 266 / 2430)</name>
    <dbReference type="NCBI Taxonomy" id="290317"/>
    <lineage>
        <taxon>Bacteria</taxon>
        <taxon>Pseudomonadati</taxon>
        <taxon>Chlorobiota</taxon>
        <taxon>Chlorobiia</taxon>
        <taxon>Chlorobiales</taxon>
        <taxon>Chlorobiaceae</taxon>
        <taxon>Chlorobium/Pelodictyon group</taxon>
        <taxon>Chlorobium</taxon>
    </lineage>
</organism>
<evidence type="ECO:0000255" key="1">
    <source>
        <dbReference type="HAMAP-Rule" id="MF_00081"/>
    </source>
</evidence>
<accession>A1BHL3</accession>
<reference key="1">
    <citation type="submission" date="2006-12" db="EMBL/GenBank/DDBJ databases">
        <title>Complete sequence of Chlorobium phaeobacteroides DSM 266.</title>
        <authorList>
            <consortium name="US DOE Joint Genome Institute"/>
            <person name="Copeland A."/>
            <person name="Lucas S."/>
            <person name="Lapidus A."/>
            <person name="Barry K."/>
            <person name="Detter J.C."/>
            <person name="Glavina del Rio T."/>
            <person name="Hammon N."/>
            <person name="Israni S."/>
            <person name="Pitluck S."/>
            <person name="Goltsman E."/>
            <person name="Schmutz J."/>
            <person name="Larimer F."/>
            <person name="Land M."/>
            <person name="Hauser L."/>
            <person name="Mikhailova N."/>
            <person name="Li T."/>
            <person name="Overmann J."/>
            <person name="Bryant D.A."/>
            <person name="Richardson P."/>
        </authorList>
    </citation>
    <scope>NUCLEOTIDE SEQUENCE [LARGE SCALE GENOMIC DNA]</scope>
    <source>
        <strain>DSM 266 / SMG 266 / 2430</strain>
    </source>
</reference>
<name>HRCA_CHLPD</name>